<name>COQ10_SCHPO</name>
<comment type="function">
    <text evidence="1">Required for the function of coenzyme Q in the respiratory chain. May serve as a chaperone or may be involved in the transport of Q6 from its site of synthesis to the catalytic sites of the respiratory complexes (By similarity).</text>
</comment>
<comment type="subunit">
    <text evidence="1">Interacts with coenzyme Q.</text>
</comment>
<comment type="subcellular location">
    <subcellularLocation>
        <location evidence="3">Mitochondrion inner membrane</location>
        <topology evidence="3">Peripheral membrane protein</topology>
        <orientation evidence="1 3">Matrix side</orientation>
    </subcellularLocation>
</comment>
<comment type="similarity">
    <text evidence="2">Belongs to the COQ10 family.</text>
</comment>
<dbReference type="EMBL" id="CU329672">
    <property type="protein sequence ID" value="CAB53079.1"/>
    <property type="molecule type" value="Genomic_DNA"/>
</dbReference>
<dbReference type="PIR" id="T41080">
    <property type="entry name" value="T41080"/>
</dbReference>
<dbReference type="RefSeq" id="NP_587994.1">
    <property type="nucleotide sequence ID" value="NM_001022985.2"/>
</dbReference>
<dbReference type="SMR" id="Q9USM9"/>
<dbReference type="BioGRID" id="275934">
    <property type="interactions" value="39"/>
</dbReference>
<dbReference type="FunCoup" id="Q9USM9">
    <property type="interactions" value="240"/>
</dbReference>
<dbReference type="STRING" id="284812.Q9USM9"/>
<dbReference type="PaxDb" id="4896-SPCC16A11.07.1"/>
<dbReference type="EnsemblFungi" id="SPCC16A11.07.1">
    <property type="protein sequence ID" value="SPCC16A11.07.1:pep"/>
    <property type="gene ID" value="SPCC16A11.07"/>
</dbReference>
<dbReference type="GeneID" id="2539368"/>
<dbReference type="KEGG" id="spo:2539368"/>
<dbReference type="PomBase" id="SPCC16A11.07">
    <property type="gene designation" value="coq10"/>
</dbReference>
<dbReference type="VEuPathDB" id="FungiDB:SPCC16A11.07"/>
<dbReference type="eggNOG" id="KOG3177">
    <property type="taxonomic scope" value="Eukaryota"/>
</dbReference>
<dbReference type="HOGENOM" id="CLU_079653_1_0_1"/>
<dbReference type="InParanoid" id="Q9USM9"/>
<dbReference type="OMA" id="RHLNSCG"/>
<dbReference type="PhylomeDB" id="Q9USM9"/>
<dbReference type="PRO" id="PR:Q9USM9"/>
<dbReference type="Proteomes" id="UP000002485">
    <property type="component" value="Chromosome III"/>
</dbReference>
<dbReference type="GO" id="GO:0005743">
    <property type="term" value="C:mitochondrial inner membrane"/>
    <property type="evidence" value="ECO:0000266"/>
    <property type="project" value="PomBase"/>
</dbReference>
<dbReference type="GO" id="GO:0005739">
    <property type="term" value="C:mitochondrion"/>
    <property type="evidence" value="ECO:0000314"/>
    <property type="project" value="PomBase"/>
</dbReference>
<dbReference type="GO" id="GO:0140104">
    <property type="term" value="F:molecular carrier activity"/>
    <property type="evidence" value="ECO:0000266"/>
    <property type="project" value="PomBase"/>
</dbReference>
<dbReference type="GO" id="GO:0048039">
    <property type="term" value="F:ubiquinone binding"/>
    <property type="evidence" value="ECO:0000314"/>
    <property type="project" value="PomBase"/>
</dbReference>
<dbReference type="GO" id="GO:0045333">
    <property type="term" value="P:cellular respiration"/>
    <property type="evidence" value="ECO:0007669"/>
    <property type="project" value="InterPro"/>
</dbReference>
<dbReference type="GO" id="GO:0006743">
    <property type="term" value="P:ubiquinone metabolic process"/>
    <property type="evidence" value="ECO:0000266"/>
    <property type="project" value="PomBase"/>
</dbReference>
<dbReference type="CDD" id="cd07813">
    <property type="entry name" value="COQ10p_like"/>
    <property type="match status" value="1"/>
</dbReference>
<dbReference type="Gene3D" id="3.30.530.20">
    <property type="match status" value="1"/>
</dbReference>
<dbReference type="InterPro" id="IPR044996">
    <property type="entry name" value="COQ10-like"/>
</dbReference>
<dbReference type="InterPro" id="IPR005031">
    <property type="entry name" value="COQ10_START"/>
</dbReference>
<dbReference type="InterPro" id="IPR023393">
    <property type="entry name" value="START-like_dom_sf"/>
</dbReference>
<dbReference type="PANTHER" id="PTHR12901:SF10">
    <property type="entry name" value="COENZYME Q-BINDING PROTEIN COQ10, MITOCHONDRIAL"/>
    <property type="match status" value="1"/>
</dbReference>
<dbReference type="PANTHER" id="PTHR12901">
    <property type="entry name" value="SPERM PROTEIN HOMOLOG"/>
    <property type="match status" value="1"/>
</dbReference>
<dbReference type="Pfam" id="PF03364">
    <property type="entry name" value="Polyketide_cyc"/>
    <property type="match status" value="1"/>
</dbReference>
<dbReference type="SUPFAM" id="SSF55961">
    <property type="entry name" value="Bet v1-like"/>
    <property type="match status" value="1"/>
</dbReference>
<reference evidence="5" key="1">
    <citation type="journal article" date="2002" name="Nature">
        <title>The genome sequence of Schizosaccharomyces pombe.</title>
        <authorList>
            <person name="Wood V."/>
            <person name="Gwilliam R."/>
            <person name="Rajandream M.A."/>
            <person name="Lyne M.H."/>
            <person name="Lyne R."/>
            <person name="Stewart A."/>
            <person name="Sgouros J.G."/>
            <person name="Peat N."/>
            <person name="Hayles J."/>
            <person name="Baker S.G."/>
            <person name="Basham D."/>
            <person name="Bowman S."/>
            <person name="Brooks K."/>
            <person name="Brown D."/>
            <person name="Brown S."/>
            <person name="Chillingworth T."/>
            <person name="Churcher C.M."/>
            <person name="Collins M."/>
            <person name="Connor R."/>
            <person name="Cronin A."/>
            <person name="Davis P."/>
            <person name="Feltwell T."/>
            <person name="Fraser A."/>
            <person name="Gentles S."/>
            <person name="Goble A."/>
            <person name="Hamlin N."/>
            <person name="Harris D.E."/>
            <person name="Hidalgo J."/>
            <person name="Hodgson G."/>
            <person name="Holroyd S."/>
            <person name="Hornsby T."/>
            <person name="Howarth S."/>
            <person name="Huckle E.J."/>
            <person name="Hunt S."/>
            <person name="Jagels K."/>
            <person name="James K.D."/>
            <person name="Jones L."/>
            <person name="Jones M."/>
            <person name="Leather S."/>
            <person name="McDonald S."/>
            <person name="McLean J."/>
            <person name="Mooney P."/>
            <person name="Moule S."/>
            <person name="Mungall K.L."/>
            <person name="Murphy L.D."/>
            <person name="Niblett D."/>
            <person name="Odell C."/>
            <person name="Oliver K."/>
            <person name="O'Neil S."/>
            <person name="Pearson D."/>
            <person name="Quail M.A."/>
            <person name="Rabbinowitsch E."/>
            <person name="Rutherford K.M."/>
            <person name="Rutter S."/>
            <person name="Saunders D."/>
            <person name="Seeger K."/>
            <person name="Sharp S."/>
            <person name="Skelton J."/>
            <person name="Simmonds M.N."/>
            <person name="Squares R."/>
            <person name="Squares S."/>
            <person name="Stevens K."/>
            <person name="Taylor K."/>
            <person name="Taylor R.G."/>
            <person name="Tivey A."/>
            <person name="Walsh S.V."/>
            <person name="Warren T."/>
            <person name="Whitehead S."/>
            <person name="Woodward J.R."/>
            <person name="Volckaert G."/>
            <person name="Aert R."/>
            <person name="Robben J."/>
            <person name="Grymonprez B."/>
            <person name="Weltjens I."/>
            <person name="Vanstreels E."/>
            <person name="Rieger M."/>
            <person name="Schaefer M."/>
            <person name="Mueller-Auer S."/>
            <person name="Gabel C."/>
            <person name="Fuchs M."/>
            <person name="Duesterhoeft A."/>
            <person name="Fritzc C."/>
            <person name="Holzer E."/>
            <person name="Moestl D."/>
            <person name="Hilbert H."/>
            <person name="Borzym K."/>
            <person name="Langer I."/>
            <person name="Beck A."/>
            <person name="Lehrach H."/>
            <person name="Reinhardt R."/>
            <person name="Pohl T.M."/>
            <person name="Eger P."/>
            <person name="Zimmermann W."/>
            <person name="Wedler H."/>
            <person name="Wambutt R."/>
            <person name="Purnelle B."/>
            <person name="Goffeau A."/>
            <person name="Cadieu E."/>
            <person name="Dreano S."/>
            <person name="Gloux S."/>
            <person name="Lelaure V."/>
            <person name="Mottier S."/>
            <person name="Galibert F."/>
            <person name="Aves S.J."/>
            <person name="Xiang Z."/>
            <person name="Hunt C."/>
            <person name="Moore K."/>
            <person name="Hurst S.M."/>
            <person name="Lucas M."/>
            <person name="Rochet M."/>
            <person name="Gaillardin C."/>
            <person name="Tallada V.A."/>
            <person name="Garzon A."/>
            <person name="Thode G."/>
            <person name="Daga R.R."/>
            <person name="Cruzado L."/>
            <person name="Jimenez J."/>
            <person name="Sanchez M."/>
            <person name="del Rey F."/>
            <person name="Benito J."/>
            <person name="Dominguez A."/>
            <person name="Revuelta J.L."/>
            <person name="Moreno S."/>
            <person name="Armstrong J."/>
            <person name="Forsburg S.L."/>
            <person name="Cerutti L."/>
            <person name="Lowe T."/>
            <person name="McCombie W.R."/>
            <person name="Paulsen I."/>
            <person name="Potashkin J."/>
            <person name="Shpakovski G.V."/>
            <person name="Ussery D."/>
            <person name="Barrell B.G."/>
            <person name="Nurse P."/>
        </authorList>
    </citation>
    <scope>NUCLEOTIDE SEQUENCE [LARGE SCALE GENOMIC DNA]</scope>
    <source>
        <strain>972 / ATCC 24843</strain>
    </source>
</reference>
<reference evidence="4" key="2">
    <citation type="journal article" date="2006" name="Nat. Biotechnol.">
        <title>ORFeome cloning and global analysis of protein localization in the fission yeast Schizosaccharomyces pombe.</title>
        <authorList>
            <person name="Matsuyama A."/>
            <person name="Arai R."/>
            <person name="Yashiroda Y."/>
            <person name="Shirai A."/>
            <person name="Kamata A."/>
            <person name="Sekido S."/>
            <person name="Kobayashi Y."/>
            <person name="Hashimoto A."/>
            <person name="Hamamoto M."/>
            <person name="Hiraoka Y."/>
            <person name="Horinouchi S."/>
            <person name="Yoshida M."/>
        </authorList>
    </citation>
    <scope>SUBCELLULAR LOCATION [LARGE SCALE ANALYSIS]</scope>
</reference>
<accession>Q9USM9</accession>
<proteinExistence type="inferred from homology"/>
<sequence length="164" mass="18866">MAFRCTLRRLECYRASRLMPYKPSFLFSLISNVNEYERFVPFCQKSKVTEYDPKTGYPTKADLTVGFKGLCETFDSKVVCDPVALTVLADASHHRLFRRLKTHWSIEEASRGRVRVDLEVDFEFASKLHGMMSKFVGSSVASEIIQGFVQQAKIKHKLESENEK</sequence>
<keyword id="KW-0472">Membrane</keyword>
<keyword id="KW-0496">Mitochondrion</keyword>
<keyword id="KW-0999">Mitochondrion inner membrane</keyword>
<keyword id="KW-1185">Reference proteome</keyword>
<keyword id="KW-0830">Ubiquinone</keyword>
<protein>
    <recommendedName>
        <fullName>Coenzyme Q-binding protein coq10, mitochondrial</fullName>
    </recommendedName>
</protein>
<evidence type="ECO:0000250" key="1">
    <source>
        <dbReference type="UniProtKB" id="Q08058"/>
    </source>
</evidence>
<evidence type="ECO:0000255" key="2"/>
<evidence type="ECO:0000269" key="3">
    <source>
    </source>
</evidence>
<evidence type="ECO:0000305" key="4"/>
<evidence type="ECO:0000312" key="5">
    <source>
        <dbReference type="EMBL" id="CAB53079.1"/>
    </source>
</evidence>
<gene>
    <name evidence="5" type="primary">coq10</name>
    <name type="ORF">SPCC16A11.07</name>
</gene>
<organism>
    <name type="scientific">Schizosaccharomyces pombe (strain 972 / ATCC 24843)</name>
    <name type="common">Fission yeast</name>
    <dbReference type="NCBI Taxonomy" id="284812"/>
    <lineage>
        <taxon>Eukaryota</taxon>
        <taxon>Fungi</taxon>
        <taxon>Dikarya</taxon>
        <taxon>Ascomycota</taxon>
        <taxon>Taphrinomycotina</taxon>
        <taxon>Schizosaccharomycetes</taxon>
        <taxon>Schizosaccharomycetales</taxon>
        <taxon>Schizosaccharomycetaceae</taxon>
        <taxon>Schizosaccharomyces</taxon>
    </lineage>
</organism>
<feature type="chain" id="PRO_0000315896" description="Coenzyme Q-binding protein coq10, mitochondrial">
    <location>
        <begin position="1"/>
        <end position="164"/>
    </location>
</feature>